<proteinExistence type="evidence at protein level"/>
<organism>
    <name type="scientific">Methanothermococcus thermolithotrophicus</name>
    <name type="common">Methanococcus thermolithotrophicus</name>
    <dbReference type="NCBI Taxonomy" id="2186"/>
    <lineage>
        <taxon>Archaea</taxon>
        <taxon>Methanobacteriati</taxon>
        <taxon>Methanobacteriota</taxon>
        <taxon>Methanomada group</taxon>
        <taxon>Methanococci</taxon>
        <taxon>Methanococcales</taxon>
        <taxon>Methanococcaceae</taxon>
        <taxon>Methanothermococcus</taxon>
    </lineage>
</organism>
<gene>
    <name type="primary">hmd</name>
</gene>
<comment type="function">
    <text evidence="1">Catalyzes the reversible reduction of methenyl-H(4)MPT(+) to methylene-H(4)MPT.</text>
</comment>
<comment type="catalytic activity">
    <reaction evidence="1">
        <text>5,10-methenyl-5,6,7,8-tetrahydromethanopterin + H2 = 5,10-methylenetetrahydromethanopterin + H(+)</text>
        <dbReference type="Rhea" id="RHEA:20017"/>
        <dbReference type="ChEBI" id="CHEBI:15378"/>
        <dbReference type="ChEBI" id="CHEBI:18276"/>
        <dbReference type="ChEBI" id="CHEBI:57818"/>
        <dbReference type="ChEBI" id="CHEBI:58337"/>
        <dbReference type="EC" id="1.12.98.2"/>
    </reaction>
</comment>
<comment type="biophysicochemical properties">
    <temperatureDependence>
        <text evidence="1">Optimum temperature is 80 degrees Celsius.</text>
    </temperatureDependence>
</comment>
<comment type="pathway">
    <text>One-carbon metabolism; methanogenesis from CO(2); 5,10-methylene-5,6,7,8-tetrahydromethanopterin from 5,10-methenyl-5,6,7,8-tetrahydromethanopterin (hydrogen route): step 1/1.</text>
</comment>
<comment type="subunit">
    <text evidence="3">Homotetramer.</text>
</comment>
<comment type="mass spectrometry" mass="38039.0" error="38.0" method="MALDI" evidence="1"/>
<comment type="similarity">
    <text evidence="2">Belongs to the HMD family.</text>
</comment>
<feature type="chain" id="PRO_0000218514" description="5,10-methenyltetrahydromethanopterin hydrogenase">
    <location>
        <begin position="1"/>
        <end position="353"/>
    </location>
</feature>
<feature type="sequence conflict" description="In Ref. 1; AA sequence." evidence="2" ref="1">
    <original>R</original>
    <variation>A</variation>
    <location>
        <position position="24"/>
    </location>
</feature>
<feature type="sequence conflict" description="In Ref. 1; AA sequence." evidence="2" ref="1">
    <original>C</original>
    <variation>E</variation>
    <location>
        <position position="250"/>
    </location>
</feature>
<feature type="sequence conflict" description="In Ref. 1; AA sequence." evidence="2" ref="1">
    <original>D</original>
    <variation>DAD</variation>
    <location>
        <position position="280"/>
    </location>
</feature>
<feature type="sequence conflict" description="In Ref. 1; AA sequence." evidence="2" ref="1">
    <original>D</original>
    <variation>R</variation>
    <location>
        <position position="287"/>
    </location>
</feature>
<feature type="sequence conflict" description="In Ref. 1; AA sequence." evidence="2" ref="1">
    <original>C</original>
    <variation>E</variation>
    <location>
        <position position="322"/>
    </location>
</feature>
<reference key="1">
    <citation type="journal article" date="1996" name="Arch. Microbiol.">
        <title>Purification, properties and primary structure of H2-forming N5,N10-methylenetetrahydromethanopterin dehydrogenase from Methanococcus thermolithotrophicus.</title>
        <authorList>
            <person name="Hartmann G.C."/>
            <person name="Klein A.R."/>
            <person name="Linder M."/>
            <person name="Thauer R.K."/>
        </authorList>
    </citation>
    <scope>NUCLEOTIDE SEQUENCE [GENOMIC DNA]</scope>
    <scope>PROTEIN SEQUENCE OF 1-31; 141-151; 210-225; 242-260; 274-293 AND 313-334</scope>
    <scope>MASS SPECTROMETRY</scope>
    <scope>FUNCTION</scope>
    <scope>CATALYTIC ACTIVITY</scope>
    <scope>BIOPHYSICOCHEMICAL PROPERTIES</scope>
    <scope>SUBUNIT</scope>
    <source>
        <strain>ATCC 35097 / DSM 2095 / JCM 10549 / OCM 138 / SN-1</strain>
    </source>
</reference>
<protein>
    <recommendedName>
        <fullName>5,10-methenyltetrahydromethanopterin hydrogenase</fullName>
        <ecNumber>1.12.98.2</ecNumber>
    </recommendedName>
    <alternativeName>
        <fullName>H(2)-dependent methylene-H(4)MPT dehydrogenase</fullName>
    </alternativeName>
    <alternativeName>
        <fullName>H(2)-forming N(5),N(10)-methylenetetrahydromethanopterin dehydrogenase</fullName>
    </alternativeName>
    <alternativeName>
        <fullName>N(5),N(10)-methenyltetrahydromethanopterin hydrogenase</fullName>
    </alternativeName>
</protein>
<evidence type="ECO:0000269" key="1">
    <source>
    </source>
</evidence>
<evidence type="ECO:0000305" key="2"/>
<evidence type="ECO:0000305" key="3">
    <source>
    </source>
</evidence>
<sequence length="353" mass="37988">MKVAILGAGCYRTHAACGITNFARAAEVAKKVGIPEITMTHSTITMGAELLHLVDEIDEVVVSDPCFAEEPGLVIIDEFDPKEVMEAHLAGEPEKVMPAIRDAVKAKAKEVPKPPKGCIHFVHPEKVGLKVTSDDVEAVKDADIIITWLPKGGSQPAIIKKFVDAIKEGAIVTHACTIPTPKFAKIFKDLGRDDLNIISYHPGAVPEMKGQVFISEGYASEEAVEKMYCIAKEARGTAYKMPANLISPVCDMGSAVTAPVYAAVLAYRDAVTKILGAPADFAQMMADEAITQILELMRKEGINNMEKTLDPKALTGTADSMCFGPLSDILPPALKVLEKHAAEEESCCCELKK</sequence>
<accession>Q50759</accession>
<keyword id="KW-0903">Direct protein sequencing</keyword>
<keyword id="KW-0484">Methanogenesis</keyword>
<keyword id="KW-0554">One-carbon metabolism</keyword>
<keyword id="KW-0560">Oxidoreductase</keyword>
<name>HMD_METTL</name>
<dbReference type="EC" id="1.12.98.2"/>
<dbReference type="EMBL" id="X92848">
    <property type="protein sequence ID" value="CAA63433.1"/>
    <property type="molecule type" value="Genomic_DNA"/>
</dbReference>
<dbReference type="RefSeq" id="WP_018153721.1">
    <property type="nucleotide sequence ID" value="NZ_OX296583.1"/>
</dbReference>
<dbReference type="SMR" id="Q50759"/>
<dbReference type="GeneID" id="75543064"/>
<dbReference type="UniPathway" id="UPA00640">
    <property type="reaction ID" value="UER00696"/>
</dbReference>
<dbReference type="GO" id="GO:0047068">
    <property type="term" value="F:N5,N10-methenyltetrahydromethanopterin hydrogenase activity"/>
    <property type="evidence" value="ECO:0007669"/>
    <property type="project" value="UniProtKB-UniRule"/>
</dbReference>
<dbReference type="GO" id="GO:0004735">
    <property type="term" value="F:pyrroline-5-carboxylate reductase activity"/>
    <property type="evidence" value="ECO:0007669"/>
    <property type="project" value="TreeGrafter"/>
</dbReference>
<dbReference type="GO" id="GO:0055129">
    <property type="term" value="P:L-proline biosynthetic process"/>
    <property type="evidence" value="ECO:0007669"/>
    <property type="project" value="TreeGrafter"/>
</dbReference>
<dbReference type="GO" id="GO:0019386">
    <property type="term" value="P:methanogenesis, from carbon dioxide"/>
    <property type="evidence" value="ECO:0007669"/>
    <property type="project" value="UniProtKB-UniRule"/>
</dbReference>
<dbReference type="GO" id="GO:0006730">
    <property type="term" value="P:one-carbon metabolic process"/>
    <property type="evidence" value="ECO:0007669"/>
    <property type="project" value="UniProtKB-UniRule"/>
</dbReference>
<dbReference type="Gene3D" id="1.20.120.1300">
    <property type="entry name" value="Hmd, C-terminal helical subdomain"/>
    <property type="match status" value="1"/>
</dbReference>
<dbReference type="Gene3D" id="3.40.50.720">
    <property type="entry name" value="NAD(P)-binding Rossmann-like Domain"/>
    <property type="match status" value="1"/>
</dbReference>
<dbReference type="HAMAP" id="MF_01090">
    <property type="entry name" value="HMD"/>
    <property type="match status" value="1"/>
</dbReference>
<dbReference type="InterPro" id="IPR008927">
    <property type="entry name" value="6-PGluconate_DH-like_C_sf"/>
</dbReference>
<dbReference type="InterPro" id="IPR010062">
    <property type="entry name" value="HMD"/>
</dbReference>
<dbReference type="InterPro" id="IPR004889">
    <property type="entry name" value="HMD_C"/>
</dbReference>
<dbReference type="InterPro" id="IPR038182">
    <property type="entry name" value="HMD_C_sf"/>
</dbReference>
<dbReference type="InterPro" id="IPR055205">
    <property type="entry name" value="HMD_N"/>
</dbReference>
<dbReference type="InterPro" id="IPR024190">
    <property type="entry name" value="METHMP_Hmd"/>
</dbReference>
<dbReference type="InterPro" id="IPR036291">
    <property type="entry name" value="NAD(P)-bd_dom_sf"/>
</dbReference>
<dbReference type="NCBIfam" id="TIGR01723">
    <property type="entry name" value="hmd_TIGR"/>
    <property type="match status" value="1"/>
</dbReference>
<dbReference type="PANTHER" id="PTHR11645">
    <property type="entry name" value="PYRROLINE-5-CARBOXYLATE REDUCTASE"/>
    <property type="match status" value="1"/>
</dbReference>
<dbReference type="PANTHER" id="PTHR11645:SF0">
    <property type="entry name" value="PYRROLINE-5-CARBOXYLATE REDUCTASE 3"/>
    <property type="match status" value="1"/>
</dbReference>
<dbReference type="Pfam" id="PF03201">
    <property type="entry name" value="HMD"/>
    <property type="match status" value="1"/>
</dbReference>
<dbReference type="Pfam" id="PF22616">
    <property type="entry name" value="HMD_N"/>
    <property type="match status" value="1"/>
</dbReference>
<dbReference type="PIRSF" id="PIRSF016158">
    <property type="entry name" value="HMD"/>
    <property type="match status" value="1"/>
</dbReference>
<dbReference type="PIRSF" id="PIRSF500165">
    <property type="entry name" value="HMDI"/>
    <property type="match status" value="1"/>
</dbReference>
<dbReference type="SUPFAM" id="SSF48179">
    <property type="entry name" value="6-phosphogluconate dehydrogenase C-terminal domain-like"/>
    <property type="match status" value="1"/>
</dbReference>
<dbReference type="SUPFAM" id="SSF51735">
    <property type="entry name" value="NAD(P)-binding Rossmann-fold domains"/>
    <property type="match status" value="1"/>
</dbReference>